<feature type="chain" id="PRO_1000090232" description="Cobyric acid synthase">
    <location>
        <begin position="1"/>
        <end position="513"/>
    </location>
</feature>
<feature type="domain" description="GATase cobBQ-type" evidence="1">
    <location>
        <begin position="270"/>
        <end position="470"/>
    </location>
</feature>
<feature type="active site" description="Nucleophile" evidence="1">
    <location>
        <position position="351"/>
    </location>
</feature>
<feature type="active site" evidence="1">
    <location>
        <position position="462"/>
    </location>
</feature>
<comment type="function">
    <text evidence="1">Catalyzes amidations at positions B, D, E, and G on adenosylcobyrinic A,C-diamide. NH(2) groups are provided by glutamine, and one molecule of ATP is hydrogenolyzed for each amidation.</text>
</comment>
<comment type="pathway">
    <text evidence="1">Cofactor biosynthesis; adenosylcobalamin biosynthesis.</text>
</comment>
<comment type="similarity">
    <text evidence="1">Belongs to the CobB/CobQ family. CobQ subfamily.</text>
</comment>
<protein>
    <recommendedName>
        <fullName evidence="1">Cobyric acid synthase</fullName>
    </recommendedName>
</protein>
<accession>B1Y856</accession>
<proteinExistence type="inferred from homology"/>
<sequence length="513" mass="54331">MSDLVRSPARAVMVLGTSSGAGKSWLATALCRWYARQGLKVAPFKAQNMSNNARVVPGLIGADGAQPMGEIGSAQYFQALAARCVPGVMHNPVLLKPEADTRSQVVVLGEVRRDLAEVPWRERSEALWPHARAALQQLMAHNDVVVIEGAGSPAEINLHASDYVNMRTALAAQAACLVITDIDRGGAFAHLYGTHQLLPADERALIRGFVLNRFRGDAALLAPGPEQLQALTGVPTIGVLPMWREHGLPEEDGLYEPGGHTAAPGHAAQRLRIAIVAYPRISNLDEFQPLRNLPGVQLVWARQPADLERADWVILPGSKHSQADLAWLRAQRLDAAIARHAAAGGALLGICGGLQMLGEALIDLHGVEGGFDALGGNGPGLGLLPLVTQFDPHKLLRPTRASFGATHGVWAALAGVAFDGYEIHNGRSIQHPAMASALPALRSTCGDTIGWQNGSVLGVYTHGLFESPAVLQALFGAGCRTLDSVFDGLADFAERHFSLGALAGLLSPKQPPG</sequence>
<gene>
    <name evidence="1" type="primary">cobQ</name>
    <name type="ordered locus">Lcho_2661</name>
</gene>
<reference key="1">
    <citation type="submission" date="2008-03" db="EMBL/GenBank/DDBJ databases">
        <title>Complete sequence of Leptothrix cholodnii SP-6.</title>
        <authorList>
            <consortium name="US DOE Joint Genome Institute"/>
            <person name="Copeland A."/>
            <person name="Lucas S."/>
            <person name="Lapidus A."/>
            <person name="Glavina del Rio T."/>
            <person name="Dalin E."/>
            <person name="Tice H."/>
            <person name="Bruce D."/>
            <person name="Goodwin L."/>
            <person name="Pitluck S."/>
            <person name="Chertkov O."/>
            <person name="Brettin T."/>
            <person name="Detter J.C."/>
            <person name="Han C."/>
            <person name="Kuske C.R."/>
            <person name="Schmutz J."/>
            <person name="Larimer F."/>
            <person name="Land M."/>
            <person name="Hauser L."/>
            <person name="Kyrpides N."/>
            <person name="Lykidis A."/>
            <person name="Emerson D."/>
            <person name="Richardson P."/>
        </authorList>
    </citation>
    <scope>NUCLEOTIDE SEQUENCE [LARGE SCALE GENOMIC DNA]</scope>
    <source>
        <strain>ATCC 51168 / LMG 8142 / SP-6</strain>
    </source>
</reference>
<evidence type="ECO:0000255" key="1">
    <source>
        <dbReference type="HAMAP-Rule" id="MF_00028"/>
    </source>
</evidence>
<dbReference type="EMBL" id="CP001013">
    <property type="protein sequence ID" value="ACB34926.1"/>
    <property type="molecule type" value="Genomic_DNA"/>
</dbReference>
<dbReference type="RefSeq" id="WP_012347682.1">
    <property type="nucleotide sequence ID" value="NC_010524.1"/>
</dbReference>
<dbReference type="STRING" id="395495.Lcho_2661"/>
<dbReference type="KEGG" id="lch:Lcho_2661"/>
<dbReference type="eggNOG" id="COG1492">
    <property type="taxonomic scope" value="Bacteria"/>
</dbReference>
<dbReference type="HOGENOM" id="CLU_019250_2_1_4"/>
<dbReference type="OrthoDB" id="9808302at2"/>
<dbReference type="UniPathway" id="UPA00148"/>
<dbReference type="Proteomes" id="UP000001693">
    <property type="component" value="Chromosome"/>
</dbReference>
<dbReference type="GO" id="GO:0015420">
    <property type="term" value="F:ABC-type vitamin B12 transporter activity"/>
    <property type="evidence" value="ECO:0007669"/>
    <property type="project" value="UniProtKB-UniRule"/>
</dbReference>
<dbReference type="GO" id="GO:0003824">
    <property type="term" value="F:catalytic activity"/>
    <property type="evidence" value="ECO:0007669"/>
    <property type="project" value="InterPro"/>
</dbReference>
<dbReference type="GO" id="GO:0009236">
    <property type="term" value="P:cobalamin biosynthetic process"/>
    <property type="evidence" value="ECO:0007669"/>
    <property type="project" value="UniProtKB-UniRule"/>
</dbReference>
<dbReference type="CDD" id="cd05389">
    <property type="entry name" value="CobQ_N"/>
    <property type="match status" value="1"/>
</dbReference>
<dbReference type="CDD" id="cd01750">
    <property type="entry name" value="GATase1_CobQ"/>
    <property type="match status" value="1"/>
</dbReference>
<dbReference type="Gene3D" id="3.40.50.880">
    <property type="match status" value="1"/>
</dbReference>
<dbReference type="Gene3D" id="3.40.50.300">
    <property type="entry name" value="P-loop containing nucleotide triphosphate hydrolases"/>
    <property type="match status" value="1"/>
</dbReference>
<dbReference type="HAMAP" id="MF_00028">
    <property type="entry name" value="CobQ"/>
    <property type="match status" value="1"/>
</dbReference>
<dbReference type="InterPro" id="IPR029062">
    <property type="entry name" value="Class_I_gatase-like"/>
</dbReference>
<dbReference type="InterPro" id="IPR002586">
    <property type="entry name" value="CobQ/CobB/MinD/ParA_Nub-bd_dom"/>
</dbReference>
<dbReference type="InterPro" id="IPR033949">
    <property type="entry name" value="CobQ_GATase1"/>
</dbReference>
<dbReference type="InterPro" id="IPR047045">
    <property type="entry name" value="CobQ_N"/>
</dbReference>
<dbReference type="InterPro" id="IPR004459">
    <property type="entry name" value="CobQ_synth"/>
</dbReference>
<dbReference type="InterPro" id="IPR011698">
    <property type="entry name" value="GATase_3"/>
</dbReference>
<dbReference type="InterPro" id="IPR027417">
    <property type="entry name" value="P-loop_NTPase"/>
</dbReference>
<dbReference type="NCBIfam" id="TIGR00313">
    <property type="entry name" value="cobQ"/>
    <property type="match status" value="1"/>
</dbReference>
<dbReference type="NCBIfam" id="NF001989">
    <property type="entry name" value="PRK00784.1"/>
    <property type="match status" value="1"/>
</dbReference>
<dbReference type="PANTHER" id="PTHR21343:SF1">
    <property type="entry name" value="COBYRIC ACID SYNTHASE"/>
    <property type="match status" value="1"/>
</dbReference>
<dbReference type="PANTHER" id="PTHR21343">
    <property type="entry name" value="DETHIOBIOTIN SYNTHETASE"/>
    <property type="match status" value="1"/>
</dbReference>
<dbReference type="Pfam" id="PF01656">
    <property type="entry name" value="CbiA"/>
    <property type="match status" value="1"/>
</dbReference>
<dbReference type="Pfam" id="PF07685">
    <property type="entry name" value="GATase_3"/>
    <property type="match status" value="1"/>
</dbReference>
<dbReference type="SUPFAM" id="SSF52317">
    <property type="entry name" value="Class I glutamine amidotransferase-like"/>
    <property type="match status" value="1"/>
</dbReference>
<dbReference type="SUPFAM" id="SSF52540">
    <property type="entry name" value="P-loop containing nucleoside triphosphate hydrolases"/>
    <property type="match status" value="1"/>
</dbReference>
<dbReference type="PROSITE" id="PS51274">
    <property type="entry name" value="GATASE_COBBQ"/>
    <property type="match status" value="1"/>
</dbReference>
<keyword id="KW-0169">Cobalamin biosynthesis</keyword>
<keyword id="KW-0315">Glutamine amidotransferase</keyword>
<keyword id="KW-1185">Reference proteome</keyword>
<name>COBQ_LEPCP</name>
<organism>
    <name type="scientific">Leptothrix cholodnii (strain ATCC 51168 / LMG 8142 / SP-6)</name>
    <name type="common">Leptothrix discophora (strain SP-6)</name>
    <dbReference type="NCBI Taxonomy" id="395495"/>
    <lineage>
        <taxon>Bacteria</taxon>
        <taxon>Pseudomonadati</taxon>
        <taxon>Pseudomonadota</taxon>
        <taxon>Betaproteobacteria</taxon>
        <taxon>Burkholderiales</taxon>
        <taxon>Sphaerotilaceae</taxon>
        <taxon>Leptothrix</taxon>
    </lineage>
</organism>